<reference key="1">
    <citation type="journal article" date="2002" name="J. Bacteriol.">
        <title>Whole-genome comparison of Mycobacterium tuberculosis clinical and laboratory strains.</title>
        <authorList>
            <person name="Fleischmann R.D."/>
            <person name="Alland D."/>
            <person name="Eisen J.A."/>
            <person name="Carpenter L."/>
            <person name="White O."/>
            <person name="Peterson J.D."/>
            <person name="DeBoy R.T."/>
            <person name="Dodson R.J."/>
            <person name="Gwinn M.L."/>
            <person name="Haft D.H."/>
            <person name="Hickey E.K."/>
            <person name="Kolonay J.F."/>
            <person name="Nelson W.C."/>
            <person name="Umayam L.A."/>
            <person name="Ermolaeva M.D."/>
            <person name="Salzberg S.L."/>
            <person name="Delcher A."/>
            <person name="Utterback T.R."/>
            <person name="Weidman J.F."/>
            <person name="Khouri H.M."/>
            <person name="Gill J."/>
            <person name="Mikula A."/>
            <person name="Bishai W."/>
            <person name="Jacobs W.R. Jr."/>
            <person name="Venter J.C."/>
            <person name="Fraser C.M."/>
        </authorList>
    </citation>
    <scope>NUCLEOTIDE SEQUENCE [LARGE SCALE GENOMIC DNA]</scope>
    <source>
        <strain>CDC 1551 / Oshkosh</strain>
    </source>
</reference>
<name>TGS2_MYCTO</name>
<feature type="chain" id="PRO_0000427677" description="Probable diacyglycerol O-acyltransferase tgs2">
    <location>
        <begin position="1"/>
        <end position="454"/>
    </location>
</feature>
<feature type="active site" description="Proton acceptor" evidence="3">
    <location>
        <position position="139"/>
    </location>
</feature>
<organism>
    <name type="scientific">Mycobacterium tuberculosis (strain CDC 1551 / Oshkosh)</name>
    <dbReference type="NCBI Taxonomy" id="83331"/>
    <lineage>
        <taxon>Bacteria</taxon>
        <taxon>Bacillati</taxon>
        <taxon>Actinomycetota</taxon>
        <taxon>Actinomycetes</taxon>
        <taxon>Mycobacteriales</taxon>
        <taxon>Mycobacteriaceae</taxon>
        <taxon>Mycobacterium</taxon>
        <taxon>Mycobacterium tuberculosis complex</taxon>
    </lineage>
</organism>
<proteinExistence type="inferred from homology"/>
<comment type="function">
    <text evidence="2">Catalyzes the terminal and only committed step in triacylglycerol synthesis by using diacylglycerol and fatty acyl CoA as substrates. Required for storage lipid synthesis.</text>
</comment>
<comment type="catalytic activity">
    <reaction evidence="1">
        <text>an acyl-CoA + a 1,2-diacyl-sn-glycerol = a triacyl-sn-glycerol + CoA</text>
        <dbReference type="Rhea" id="RHEA:10868"/>
        <dbReference type="ChEBI" id="CHEBI:17815"/>
        <dbReference type="ChEBI" id="CHEBI:57287"/>
        <dbReference type="ChEBI" id="CHEBI:58342"/>
        <dbReference type="ChEBI" id="CHEBI:64615"/>
        <dbReference type="EC" id="2.3.1.20"/>
    </reaction>
</comment>
<comment type="catalytic activity">
    <reaction evidence="1">
        <text>a long chain fatty alcohol + a fatty acyl-CoA = a wax ester + CoA</text>
        <dbReference type="Rhea" id="RHEA:38443"/>
        <dbReference type="ChEBI" id="CHEBI:10036"/>
        <dbReference type="ChEBI" id="CHEBI:17135"/>
        <dbReference type="ChEBI" id="CHEBI:57287"/>
        <dbReference type="ChEBI" id="CHEBI:77636"/>
        <dbReference type="EC" id="2.3.1.75"/>
    </reaction>
</comment>
<comment type="pathway">
    <text>Glycerolipid metabolism; triacylglycerol biosynthesis.</text>
</comment>
<comment type="similarity">
    <text evidence="4">Belongs to the long-chain O-acyltransferase family.</text>
</comment>
<protein>
    <recommendedName>
        <fullName>Probable diacyglycerol O-acyltransferase tgs2</fullName>
        <shortName>TGS2</shortName>
    </recommendedName>
    <alternativeName>
        <fullName>Diacylglycerol O-acyltransferase</fullName>
        <shortName>DGAT</shortName>
        <ecNumber evidence="1">2.3.1.20</ecNumber>
    </alternativeName>
    <alternativeName>
        <fullName>Long-chain-alcohol O-fatty-acyltransferase</fullName>
        <ecNumber evidence="1">2.3.1.75</ecNumber>
    </alternativeName>
    <alternativeName>
        <fullName>Probable triacylglycerol synthase tgs2</fullName>
    </alternativeName>
    <alternativeName>
        <fullName>Wax ester synthase/acyl-CoA:diacylglycerol acyltransferase</fullName>
    </alternativeName>
    <alternativeName>
        <fullName>Wax synthase</fullName>
        <shortName>WS</shortName>
    </alternativeName>
</protein>
<keyword id="KW-0012">Acyltransferase</keyword>
<keyword id="KW-0319">Glycerol metabolism</keyword>
<keyword id="KW-0444">Lipid biosynthesis</keyword>
<keyword id="KW-0443">Lipid metabolism</keyword>
<keyword id="KW-1185">Reference proteome</keyword>
<keyword id="KW-0808">Transferase</keyword>
<evidence type="ECO:0000250" key="1">
    <source>
        <dbReference type="UniProtKB" id="P9WKC7"/>
    </source>
</evidence>
<evidence type="ECO:0000250" key="2">
    <source>
        <dbReference type="UniProtKB" id="P9WKC9"/>
    </source>
</evidence>
<evidence type="ECO:0000255" key="3"/>
<evidence type="ECO:0000305" key="4"/>
<accession>P9WKC6</accession>
<accession>L0TGD2</accession>
<accession>O69701</accession>
<accession>P67210</accession>
<sequence>MDLMMPNDSMFLFIESREHPMHVGGLSLFEPPQGAGPEFVREFTERLVANDEFQPMFRKHPATIGGGIARVAWAYDDDIDIDYHVRRSALPSPGRVRDLLELTSRLHTSLLDRHRPLWELHVVEGLNDGRFAMYTKMHHALIDGVSAMKLAQRTLSADPDDAEVRAIWNLPPRPRTRPPSDGSSLLDALFKMAGSVVGLAPSTLKLARAALLEQQLTLPFAAPHSMFNVKVGGARRCAAQSWSLDRIKSVKQAAGVTVNDAVLAMCAGALRYYLIERNALPDRPLIAMVPVSLRSKEDADAGGNLVGSVLCNLATHVDDPAQRIQTISASMDGNKKVLSELPQLQVLALSALNMAPLTLAGVPGFLSAVPPPFNIVISNVPGPVDPLYYGTARLDGSYPLSNIPDGQALNITLVNNAGNLDFGLVGCRRSVPHLQRLLAHLESSLKDLEQAVGI</sequence>
<dbReference type="EC" id="2.3.1.20" evidence="1"/>
<dbReference type="EC" id="2.3.1.75" evidence="1"/>
<dbReference type="EMBL" id="AE000516">
    <property type="protein sequence ID" value="AAK48206.1"/>
    <property type="molecule type" value="Genomic_DNA"/>
</dbReference>
<dbReference type="PIR" id="G70797">
    <property type="entry name" value="G70797"/>
</dbReference>
<dbReference type="RefSeq" id="WP_003420440.1">
    <property type="nucleotide sequence ID" value="NZ_KK341227.1"/>
</dbReference>
<dbReference type="SMR" id="P9WKC6"/>
<dbReference type="KEGG" id="mtc:MT3839"/>
<dbReference type="PATRIC" id="fig|83331.31.peg.4134"/>
<dbReference type="HOGENOM" id="CLU_024186_4_1_11"/>
<dbReference type="UniPathway" id="UPA00282"/>
<dbReference type="Proteomes" id="UP000001020">
    <property type="component" value="Chromosome"/>
</dbReference>
<dbReference type="GO" id="GO:0005886">
    <property type="term" value="C:plasma membrane"/>
    <property type="evidence" value="ECO:0007669"/>
    <property type="project" value="TreeGrafter"/>
</dbReference>
<dbReference type="GO" id="GO:0004144">
    <property type="term" value="F:diacylglycerol O-acyltransferase activity"/>
    <property type="evidence" value="ECO:0007669"/>
    <property type="project" value="UniProtKB-EC"/>
</dbReference>
<dbReference type="GO" id="GO:0047196">
    <property type="term" value="F:long-chain-alcohol O-fatty-acyltransferase activity"/>
    <property type="evidence" value="ECO:0007669"/>
    <property type="project" value="UniProtKB-EC"/>
</dbReference>
<dbReference type="GO" id="GO:0051701">
    <property type="term" value="P:biological process involved in interaction with host"/>
    <property type="evidence" value="ECO:0007669"/>
    <property type="project" value="TreeGrafter"/>
</dbReference>
<dbReference type="GO" id="GO:0006071">
    <property type="term" value="P:glycerol metabolic process"/>
    <property type="evidence" value="ECO:0007669"/>
    <property type="project" value="UniProtKB-KW"/>
</dbReference>
<dbReference type="GO" id="GO:0001666">
    <property type="term" value="P:response to hypoxia"/>
    <property type="evidence" value="ECO:0007669"/>
    <property type="project" value="TreeGrafter"/>
</dbReference>
<dbReference type="GO" id="GO:0071731">
    <property type="term" value="P:response to nitric oxide"/>
    <property type="evidence" value="ECO:0007669"/>
    <property type="project" value="TreeGrafter"/>
</dbReference>
<dbReference type="GO" id="GO:0019432">
    <property type="term" value="P:triglyceride biosynthetic process"/>
    <property type="evidence" value="ECO:0007669"/>
    <property type="project" value="UniProtKB-UniPathway"/>
</dbReference>
<dbReference type="InterPro" id="IPR014292">
    <property type="entry name" value="Acyl_transf_WS/DGAT"/>
</dbReference>
<dbReference type="InterPro" id="IPR045034">
    <property type="entry name" value="O-acyltransferase_WSD1-like"/>
</dbReference>
<dbReference type="InterPro" id="IPR009721">
    <property type="entry name" value="O-acyltransferase_WSD1_C"/>
</dbReference>
<dbReference type="InterPro" id="IPR004255">
    <property type="entry name" value="O-acyltransferase_WSD1_N"/>
</dbReference>
<dbReference type="NCBIfam" id="TIGR02946">
    <property type="entry name" value="acyl_WS_DGAT"/>
    <property type="match status" value="1"/>
</dbReference>
<dbReference type="PANTHER" id="PTHR31650">
    <property type="entry name" value="O-ACYLTRANSFERASE (WSD1-LIKE) FAMILY PROTEIN"/>
    <property type="match status" value="1"/>
</dbReference>
<dbReference type="PANTHER" id="PTHR31650:SF1">
    <property type="entry name" value="WAX ESTER SYNTHASE_DIACYLGLYCEROL ACYLTRANSFERASE 4-RELATED"/>
    <property type="match status" value="1"/>
</dbReference>
<dbReference type="Pfam" id="PF06974">
    <property type="entry name" value="WS_DGAT_C"/>
    <property type="match status" value="1"/>
</dbReference>
<dbReference type="Pfam" id="PF03007">
    <property type="entry name" value="WS_DGAT_cat"/>
    <property type="match status" value="1"/>
</dbReference>
<dbReference type="SUPFAM" id="SSF52777">
    <property type="entry name" value="CoA-dependent acyltransferases"/>
    <property type="match status" value="1"/>
</dbReference>
<gene>
    <name type="primary">tgs2</name>
    <name type="ordered locus">MT3839</name>
</gene>